<dbReference type="EMBL" id="BA000031">
    <property type="protein sequence ID" value="BAC58592.1"/>
    <property type="molecule type" value="Genomic_DNA"/>
</dbReference>
<dbReference type="RefSeq" id="NP_796708.1">
    <property type="nucleotide sequence ID" value="NC_004603.1"/>
</dbReference>
<dbReference type="RefSeq" id="WP_005383095.1">
    <property type="nucleotide sequence ID" value="NC_004603.1"/>
</dbReference>
<dbReference type="SMR" id="Q87SU3"/>
<dbReference type="GeneID" id="83583055"/>
<dbReference type="KEGG" id="vpa:VP0329"/>
<dbReference type="PATRIC" id="fig|223926.6.peg.316"/>
<dbReference type="eggNOG" id="COG0211">
    <property type="taxonomic scope" value="Bacteria"/>
</dbReference>
<dbReference type="HOGENOM" id="CLU_095424_4_1_6"/>
<dbReference type="PRO" id="PR:Q87SU3"/>
<dbReference type="Proteomes" id="UP000002493">
    <property type="component" value="Chromosome 1"/>
</dbReference>
<dbReference type="GO" id="GO:0022625">
    <property type="term" value="C:cytosolic large ribosomal subunit"/>
    <property type="evidence" value="ECO:0007669"/>
    <property type="project" value="TreeGrafter"/>
</dbReference>
<dbReference type="GO" id="GO:0003735">
    <property type="term" value="F:structural constituent of ribosome"/>
    <property type="evidence" value="ECO:0007669"/>
    <property type="project" value="InterPro"/>
</dbReference>
<dbReference type="GO" id="GO:0006412">
    <property type="term" value="P:translation"/>
    <property type="evidence" value="ECO:0007669"/>
    <property type="project" value="UniProtKB-UniRule"/>
</dbReference>
<dbReference type="FunFam" id="2.40.50.100:FF:000001">
    <property type="entry name" value="50S ribosomal protein L27"/>
    <property type="match status" value="1"/>
</dbReference>
<dbReference type="Gene3D" id="2.40.50.100">
    <property type="match status" value="1"/>
</dbReference>
<dbReference type="HAMAP" id="MF_00539">
    <property type="entry name" value="Ribosomal_bL27"/>
    <property type="match status" value="1"/>
</dbReference>
<dbReference type="InterPro" id="IPR001684">
    <property type="entry name" value="Ribosomal_bL27"/>
</dbReference>
<dbReference type="InterPro" id="IPR018261">
    <property type="entry name" value="Ribosomal_bL27_CS"/>
</dbReference>
<dbReference type="NCBIfam" id="TIGR00062">
    <property type="entry name" value="L27"/>
    <property type="match status" value="1"/>
</dbReference>
<dbReference type="PANTHER" id="PTHR15893:SF0">
    <property type="entry name" value="LARGE RIBOSOMAL SUBUNIT PROTEIN BL27M"/>
    <property type="match status" value="1"/>
</dbReference>
<dbReference type="PANTHER" id="PTHR15893">
    <property type="entry name" value="RIBOSOMAL PROTEIN L27"/>
    <property type="match status" value="1"/>
</dbReference>
<dbReference type="Pfam" id="PF01016">
    <property type="entry name" value="Ribosomal_L27"/>
    <property type="match status" value="1"/>
</dbReference>
<dbReference type="PRINTS" id="PR00063">
    <property type="entry name" value="RIBOSOMALL27"/>
</dbReference>
<dbReference type="SUPFAM" id="SSF110324">
    <property type="entry name" value="Ribosomal L27 protein-like"/>
    <property type="match status" value="1"/>
</dbReference>
<dbReference type="PROSITE" id="PS00831">
    <property type="entry name" value="RIBOSOMAL_L27"/>
    <property type="match status" value="1"/>
</dbReference>
<proteinExistence type="inferred from homology"/>
<evidence type="ECO:0000255" key="1">
    <source>
        <dbReference type="HAMAP-Rule" id="MF_00539"/>
    </source>
</evidence>
<evidence type="ECO:0000256" key="2">
    <source>
        <dbReference type="SAM" id="MobiDB-lite"/>
    </source>
</evidence>
<evidence type="ECO:0000305" key="3"/>
<feature type="chain" id="PRO_0000181203" description="Large ribosomal subunit protein bL27">
    <location>
        <begin position="1"/>
        <end position="85"/>
    </location>
</feature>
<feature type="region of interest" description="Disordered" evidence="2">
    <location>
        <begin position="1"/>
        <end position="22"/>
    </location>
</feature>
<sequence length="85" mass="9208">MAHKKAGGSTRNGRDSESKRLGVKRFGGESVLAGNIIVRQRGTKFHAGNNVGIGKDHTLFALTEGKVKFEVKGPKNRKFVSIEAE</sequence>
<gene>
    <name evidence="1" type="primary">rpmA</name>
    <name type="ordered locus">VP0329</name>
</gene>
<accession>Q87SU3</accession>
<name>RL27_VIBPA</name>
<comment type="similarity">
    <text evidence="1">Belongs to the bacterial ribosomal protein bL27 family.</text>
</comment>
<organism>
    <name type="scientific">Vibrio parahaemolyticus serotype O3:K6 (strain RIMD 2210633)</name>
    <dbReference type="NCBI Taxonomy" id="223926"/>
    <lineage>
        <taxon>Bacteria</taxon>
        <taxon>Pseudomonadati</taxon>
        <taxon>Pseudomonadota</taxon>
        <taxon>Gammaproteobacteria</taxon>
        <taxon>Vibrionales</taxon>
        <taxon>Vibrionaceae</taxon>
        <taxon>Vibrio</taxon>
    </lineage>
</organism>
<reference key="1">
    <citation type="journal article" date="2003" name="Lancet">
        <title>Genome sequence of Vibrio parahaemolyticus: a pathogenic mechanism distinct from that of V. cholerae.</title>
        <authorList>
            <person name="Makino K."/>
            <person name="Oshima K."/>
            <person name="Kurokawa K."/>
            <person name="Yokoyama K."/>
            <person name="Uda T."/>
            <person name="Tagomori K."/>
            <person name="Iijima Y."/>
            <person name="Najima M."/>
            <person name="Nakano M."/>
            <person name="Yamashita A."/>
            <person name="Kubota Y."/>
            <person name="Kimura S."/>
            <person name="Yasunaga T."/>
            <person name="Honda T."/>
            <person name="Shinagawa H."/>
            <person name="Hattori M."/>
            <person name="Iida T."/>
        </authorList>
    </citation>
    <scope>NUCLEOTIDE SEQUENCE [LARGE SCALE GENOMIC DNA]</scope>
    <source>
        <strain>RIMD 2210633</strain>
    </source>
</reference>
<protein>
    <recommendedName>
        <fullName evidence="1">Large ribosomal subunit protein bL27</fullName>
    </recommendedName>
    <alternativeName>
        <fullName evidence="3">50S ribosomal protein L27</fullName>
    </alternativeName>
</protein>
<keyword id="KW-0687">Ribonucleoprotein</keyword>
<keyword id="KW-0689">Ribosomal protein</keyword>